<comment type="catalytic activity">
    <reaction>
        <text>an acyl phosphate + H2O = a carboxylate + phosphate + H(+)</text>
        <dbReference type="Rhea" id="RHEA:14965"/>
        <dbReference type="ChEBI" id="CHEBI:15377"/>
        <dbReference type="ChEBI" id="CHEBI:15378"/>
        <dbReference type="ChEBI" id="CHEBI:29067"/>
        <dbReference type="ChEBI" id="CHEBI:43474"/>
        <dbReference type="ChEBI" id="CHEBI:59918"/>
        <dbReference type="EC" id="3.6.1.7"/>
    </reaction>
</comment>
<comment type="similarity">
    <text evidence="2">Belongs to the acylphosphatase family.</text>
</comment>
<comment type="sequence caution" evidence="2">
    <conflict type="erroneous initiation">
        <sequence resource="EMBL-CDS" id="ABC35014"/>
    </conflict>
</comment>
<sequence length="98" mass="11244">MSGDDLDERIETYYVRVRGVVQGVGFRHATVREAHALKLRGWVANLDDGSVEAMLQGPAPQIDRMLAWLRHGPSTAHVTEVTFEERPTDKRFERFQQH</sequence>
<dbReference type="EC" id="3.6.1.7"/>
<dbReference type="EMBL" id="CP000085">
    <property type="protein sequence ID" value="ABC35014.1"/>
    <property type="status" value="ALT_INIT"/>
    <property type="molecule type" value="Genomic_DNA"/>
</dbReference>
<dbReference type="RefSeq" id="WP_009894237.1">
    <property type="nucleotide sequence ID" value="NZ_CP008785.1"/>
</dbReference>
<dbReference type="SMR" id="Q2T321"/>
<dbReference type="KEGG" id="bte:BTH_II2240"/>
<dbReference type="HOGENOM" id="CLU_1746217_0_0_4"/>
<dbReference type="Proteomes" id="UP000001930">
    <property type="component" value="Chromosome II"/>
</dbReference>
<dbReference type="GO" id="GO:0003998">
    <property type="term" value="F:acylphosphatase activity"/>
    <property type="evidence" value="ECO:0007669"/>
    <property type="project" value="UniProtKB-EC"/>
</dbReference>
<dbReference type="Gene3D" id="3.30.70.100">
    <property type="match status" value="1"/>
</dbReference>
<dbReference type="InterPro" id="IPR020456">
    <property type="entry name" value="Acylphosphatase"/>
</dbReference>
<dbReference type="InterPro" id="IPR001792">
    <property type="entry name" value="Acylphosphatase-like_dom"/>
</dbReference>
<dbReference type="InterPro" id="IPR036046">
    <property type="entry name" value="Acylphosphatase-like_dom_sf"/>
</dbReference>
<dbReference type="InterPro" id="IPR017968">
    <property type="entry name" value="Acylphosphatase_CS"/>
</dbReference>
<dbReference type="NCBIfam" id="NF010998">
    <property type="entry name" value="PRK14424.1"/>
    <property type="match status" value="1"/>
</dbReference>
<dbReference type="PANTHER" id="PTHR47268">
    <property type="entry name" value="ACYLPHOSPHATASE"/>
    <property type="match status" value="1"/>
</dbReference>
<dbReference type="PANTHER" id="PTHR47268:SF4">
    <property type="entry name" value="ACYLPHOSPHATASE"/>
    <property type="match status" value="1"/>
</dbReference>
<dbReference type="Pfam" id="PF00708">
    <property type="entry name" value="Acylphosphatase"/>
    <property type="match status" value="1"/>
</dbReference>
<dbReference type="PRINTS" id="PR00112">
    <property type="entry name" value="ACYLPHPHTASE"/>
</dbReference>
<dbReference type="SUPFAM" id="SSF54975">
    <property type="entry name" value="Acylphosphatase/BLUF domain-like"/>
    <property type="match status" value="1"/>
</dbReference>
<dbReference type="PROSITE" id="PS00150">
    <property type="entry name" value="ACYLPHOSPHATASE_1"/>
    <property type="match status" value="1"/>
</dbReference>
<dbReference type="PROSITE" id="PS00151">
    <property type="entry name" value="ACYLPHOSPHATASE_2"/>
    <property type="match status" value="1"/>
</dbReference>
<dbReference type="PROSITE" id="PS51160">
    <property type="entry name" value="ACYLPHOSPHATASE_3"/>
    <property type="match status" value="1"/>
</dbReference>
<feature type="chain" id="PRO_0000326676" description="Acylphosphatase">
    <location>
        <begin position="1"/>
        <end position="98"/>
    </location>
</feature>
<feature type="domain" description="Acylphosphatase-like" evidence="1">
    <location>
        <begin position="12"/>
        <end position="98"/>
    </location>
</feature>
<feature type="active site" evidence="1">
    <location>
        <position position="27"/>
    </location>
</feature>
<feature type="active site" evidence="1">
    <location>
        <position position="45"/>
    </location>
</feature>
<reference key="1">
    <citation type="journal article" date="2005" name="BMC Genomics">
        <title>Bacterial genome adaptation to niches: divergence of the potential virulence genes in three Burkholderia species of different survival strategies.</title>
        <authorList>
            <person name="Kim H.S."/>
            <person name="Schell M.A."/>
            <person name="Yu Y."/>
            <person name="Ulrich R.L."/>
            <person name="Sarria S.H."/>
            <person name="Nierman W.C."/>
            <person name="DeShazer D."/>
        </authorList>
    </citation>
    <scope>NUCLEOTIDE SEQUENCE [LARGE SCALE GENOMIC DNA]</scope>
    <source>
        <strain>ATCC 700388 / DSM 13276 / CCUG 48851 / CIP 106301 / E264</strain>
    </source>
</reference>
<protein>
    <recommendedName>
        <fullName>Acylphosphatase</fullName>
        <ecNumber>3.6.1.7</ecNumber>
    </recommendedName>
    <alternativeName>
        <fullName>Acylphosphate phosphohydrolase</fullName>
    </alternativeName>
</protein>
<gene>
    <name type="primary">acyP</name>
    <name type="ordered locus">BTH_II2240</name>
</gene>
<evidence type="ECO:0000255" key="1">
    <source>
        <dbReference type="PROSITE-ProRule" id="PRU00520"/>
    </source>
</evidence>
<evidence type="ECO:0000305" key="2"/>
<organism>
    <name type="scientific">Burkholderia thailandensis (strain ATCC 700388 / DSM 13276 / CCUG 48851 / CIP 106301 / E264)</name>
    <dbReference type="NCBI Taxonomy" id="271848"/>
    <lineage>
        <taxon>Bacteria</taxon>
        <taxon>Pseudomonadati</taxon>
        <taxon>Pseudomonadota</taxon>
        <taxon>Betaproteobacteria</taxon>
        <taxon>Burkholderiales</taxon>
        <taxon>Burkholderiaceae</taxon>
        <taxon>Burkholderia</taxon>
        <taxon>pseudomallei group</taxon>
    </lineage>
</organism>
<name>ACYP_BURTA</name>
<keyword id="KW-0378">Hydrolase</keyword>
<accession>Q2T321</accession>
<proteinExistence type="inferred from homology"/>